<comment type="function">
    <text evidence="1">Part of the twin-arginine translocation (Tat) system that transports large folded proteins containing a characteristic twin-arginine motif in their signal peptide across membranes. Together with TatC, TatB is part of a receptor directly interacting with Tat signal peptides. TatB may form an oligomeric binding site that transiently accommodates folded Tat precursor proteins before their translocation.</text>
</comment>
<comment type="subunit">
    <text evidence="1">The Tat system comprises two distinct complexes: a TatABC complex, containing multiple copies of TatA, TatB and TatC subunits, and a separate TatA complex, containing only TatA subunits. Substrates initially bind to the TatABC complex, which probably triggers association of the separate TatA complex to form the active translocon.</text>
</comment>
<comment type="subcellular location">
    <subcellularLocation>
        <location evidence="1">Cell inner membrane</location>
        <topology evidence="1">Single-pass membrane protein</topology>
    </subcellularLocation>
</comment>
<comment type="similarity">
    <text evidence="1">Belongs to the TatB family.</text>
</comment>
<gene>
    <name evidence="1" type="primary">tatB</name>
    <name type="ordered locus">azo3339</name>
</gene>
<protein>
    <recommendedName>
        <fullName evidence="1">Sec-independent protein translocase protein TatB</fullName>
    </recommendedName>
</protein>
<name>TATB_AZOSB</name>
<evidence type="ECO:0000255" key="1">
    <source>
        <dbReference type="HAMAP-Rule" id="MF_00237"/>
    </source>
</evidence>
<evidence type="ECO:0000256" key="2">
    <source>
        <dbReference type="SAM" id="MobiDB-lite"/>
    </source>
</evidence>
<feature type="chain" id="PRO_0000301141" description="Sec-independent protein translocase protein TatB">
    <location>
        <begin position="1"/>
        <end position="142"/>
    </location>
</feature>
<feature type="transmembrane region" description="Helical" evidence="1">
    <location>
        <begin position="1"/>
        <end position="21"/>
    </location>
</feature>
<feature type="region of interest" description="Disordered" evidence="2">
    <location>
        <begin position="99"/>
        <end position="142"/>
    </location>
</feature>
<feature type="compositionally biased region" description="Low complexity" evidence="2">
    <location>
        <begin position="107"/>
        <end position="124"/>
    </location>
</feature>
<organism>
    <name type="scientific">Azoarcus sp. (strain BH72)</name>
    <dbReference type="NCBI Taxonomy" id="418699"/>
    <lineage>
        <taxon>Bacteria</taxon>
        <taxon>Pseudomonadati</taxon>
        <taxon>Pseudomonadota</taxon>
        <taxon>Betaproteobacteria</taxon>
        <taxon>Rhodocyclales</taxon>
        <taxon>Zoogloeaceae</taxon>
        <taxon>Azoarcus</taxon>
    </lineage>
</organism>
<proteinExistence type="inferred from homology"/>
<reference key="1">
    <citation type="journal article" date="2006" name="Nat. Biotechnol.">
        <title>Complete genome of the mutualistic, N2-fixing grass endophyte Azoarcus sp. strain BH72.</title>
        <authorList>
            <person name="Krause A."/>
            <person name="Ramakumar A."/>
            <person name="Bartels D."/>
            <person name="Battistoni F."/>
            <person name="Bekel T."/>
            <person name="Boch J."/>
            <person name="Boehm M."/>
            <person name="Friedrich F."/>
            <person name="Hurek T."/>
            <person name="Krause L."/>
            <person name="Linke B."/>
            <person name="McHardy A.C."/>
            <person name="Sarkar A."/>
            <person name="Schneiker S."/>
            <person name="Syed A.A."/>
            <person name="Thauer R."/>
            <person name="Vorhoelter F.-J."/>
            <person name="Weidner S."/>
            <person name="Puehler A."/>
            <person name="Reinhold-Hurek B."/>
            <person name="Kaiser O."/>
            <person name="Goesmann A."/>
        </authorList>
    </citation>
    <scope>NUCLEOTIDE SEQUENCE [LARGE SCALE GENOMIC DNA]</scope>
    <source>
        <strain>BH72</strain>
    </source>
</reference>
<keyword id="KW-0997">Cell inner membrane</keyword>
<keyword id="KW-1003">Cell membrane</keyword>
<keyword id="KW-0472">Membrane</keyword>
<keyword id="KW-0653">Protein transport</keyword>
<keyword id="KW-1185">Reference proteome</keyword>
<keyword id="KW-0811">Translocation</keyword>
<keyword id="KW-0812">Transmembrane</keyword>
<keyword id="KW-1133">Transmembrane helix</keyword>
<keyword id="KW-0813">Transport</keyword>
<accession>A1KAU9</accession>
<dbReference type="EMBL" id="AM406670">
    <property type="protein sequence ID" value="CAL95955.1"/>
    <property type="molecule type" value="Genomic_DNA"/>
</dbReference>
<dbReference type="RefSeq" id="WP_011767062.1">
    <property type="nucleotide sequence ID" value="NC_008702.1"/>
</dbReference>
<dbReference type="SMR" id="A1KAU9"/>
<dbReference type="STRING" id="62928.azo3339"/>
<dbReference type="KEGG" id="azo:azo3339"/>
<dbReference type="eggNOG" id="COG1826">
    <property type="taxonomic scope" value="Bacteria"/>
</dbReference>
<dbReference type="HOGENOM" id="CLU_086034_1_1_4"/>
<dbReference type="Proteomes" id="UP000002588">
    <property type="component" value="Chromosome"/>
</dbReference>
<dbReference type="GO" id="GO:0033281">
    <property type="term" value="C:TAT protein transport complex"/>
    <property type="evidence" value="ECO:0007669"/>
    <property type="project" value="UniProtKB-UniRule"/>
</dbReference>
<dbReference type="GO" id="GO:0008320">
    <property type="term" value="F:protein transmembrane transporter activity"/>
    <property type="evidence" value="ECO:0007669"/>
    <property type="project" value="UniProtKB-UniRule"/>
</dbReference>
<dbReference type="GO" id="GO:0043953">
    <property type="term" value="P:protein transport by the Tat complex"/>
    <property type="evidence" value="ECO:0007669"/>
    <property type="project" value="UniProtKB-UniRule"/>
</dbReference>
<dbReference type="Gene3D" id="1.20.5.3310">
    <property type="match status" value="1"/>
</dbReference>
<dbReference type="HAMAP" id="MF_00237">
    <property type="entry name" value="TatB"/>
    <property type="match status" value="1"/>
</dbReference>
<dbReference type="InterPro" id="IPR003369">
    <property type="entry name" value="TatA/B/E"/>
</dbReference>
<dbReference type="InterPro" id="IPR018448">
    <property type="entry name" value="TatB"/>
</dbReference>
<dbReference type="NCBIfam" id="TIGR01410">
    <property type="entry name" value="tatB"/>
    <property type="match status" value="1"/>
</dbReference>
<dbReference type="PANTHER" id="PTHR33162">
    <property type="entry name" value="SEC-INDEPENDENT PROTEIN TRANSLOCASE PROTEIN TATA, CHLOROPLASTIC"/>
    <property type="match status" value="1"/>
</dbReference>
<dbReference type="PANTHER" id="PTHR33162:SF1">
    <property type="entry name" value="SEC-INDEPENDENT PROTEIN TRANSLOCASE PROTEIN TATA, CHLOROPLASTIC"/>
    <property type="match status" value="1"/>
</dbReference>
<dbReference type="Pfam" id="PF02416">
    <property type="entry name" value="TatA_B_E"/>
    <property type="match status" value="1"/>
</dbReference>
<dbReference type="PRINTS" id="PR01506">
    <property type="entry name" value="TATBPROTEIN"/>
</dbReference>
<sequence length="142" mass="15342">MFDFGFSELVVIGVVMLIVVGPERLPKVARTAGHLLGRLQRYVSDVKSDIQREMQLEELKKLQQQVQQQAQALESSVRTEVAQVESSVDQVVAAIKADAAPPDNTTSAESQAAADPAAVDSSQQLELRLDTTPKQVVGSDKA</sequence>